<keyword id="KW-0068">Autocatalytic cleavage</keyword>
<keyword id="KW-0227">DNA damage</keyword>
<keyword id="KW-0234">DNA repair</keyword>
<keyword id="KW-0235">DNA replication</keyword>
<keyword id="KW-0238">DNA-binding</keyword>
<keyword id="KW-0378">Hydrolase</keyword>
<keyword id="KW-1185">Reference proteome</keyword>
<keyword id="KW-0678">Repressor</keyword>
<keyword id="KW-0742">SOS response</keyword>
<keyword id="KW-0804">Transcription</keyword>
<keyword id="KW-0805">Transcription regulation</keyword>
<gene>
    <name evidence="1" type="primary">lexA</name>
    <name type="ordered locus">AZC_2201</name>
</gene>
<comment type="function">
    <text evidence="1">Represses a number of genes involved in the response to DNA damage (SOS response), including recA and lexA. In the presence of single-stranded DNA, RecA interacts with LexA causing an autocatalytic cleavage which disrupts the DNA-binding part of LexA, leading to derepression of the SOS regulon and eventually DNA repair.</text>
</comment>
<comment type="catalytic activity">
    <reaction evidence="1">
        <text>Hydrolysis of Ala-|-Gly bond in repressor LexA.</text>
        <dbReference type="EC" id="3.4.21.88"/>
    </reaction>
</comment>
<comment type="subunit">
    <text evidence="1">Homodimer.</text>
</comment>
<comment type="similarity">
    <text evidence="1">Belongs to the peptidase S24 family.</text>
</comment>
<feature type="chain" id="PRO_1000070964" description="LexA repressor">
    <location>
        <begin position="1"/>
        <end position="236"/>
    </location>
</feature>
<feature type="DNA-binding region" description="H-T-H motif" evidence="1">
    <location>
        <begin position="26"/>
        <end position="46"/>
    </location>
</feature>
<feature type="active site" description="For autocatalytic cleavage activity" evidence="1">
    <location>
        <position position="157"/>
    </location>
</feature>
<feature type="active site" description="For autocatalytic cleavage activity" evidence="1">
    <location>
        <position position="195"/>
    </location>
</feature>
<feature type="site" description="Cleavage; by autolysis" evidence="1">
    <location>
        <begin position="122"/>
        <end position="123"/>
    </location>
</feature>
<protein>
    <recommendedName>
        <fullName evidence="1">LexA repressor</fullName>
        <ecNumber evidence="1">3.4.21.88</ecNumber>
    </recommendedName>
</protein>
<evidence type="ECO:0000255" key="1">
    <source>
        <dbReference type="HAMAP-Rule" id="MF_00015"/>
    </source>
</evidence>
<sequence length="236" mass="25740">MLTRKQYDLLRFIHERLKETGVPPSFDEMKEALDLRSKSGIHRLITALEERGFIRRLPNRARALEVVRLPDSAAPGLAAARSGGRGFSPSVIEGSLGRVRPVVDDEEPAAVVAVPVMGRIAAGSPISAIQTRSNTLNLPPEMLGTGEHFALEVRGDSMIEAGILDGDTVLIRKCDTADTGDIIVALVDDEEATLKRLRRKGASIALEAANPAYETRIFGPDRVRIQGRLVGLIRRY</sequence>
<accession>A8I825</accession>
<dbReference type="EC" id="3.4.21.88" evidence="1"/>
<dbReference type="EMBL" id="AP009384">
    <property type="protein sequence ID" value="BAF88199.1"/>
    <property type="molecule type" value="Genomic_DNA"/>
</dbReference>
<dbReference type="RefSeq" id="WP_012170728.1">
    <property type="nucleotide sequence ID" value="NC_009937.1"/>
</dbReference>
<dbReference type="SMR" id="A8I825"/>
<dbReference type="STRING" id="438753.AZC_2201"/>
<dbReference type="MEROPS" id="S24.001"/>
<dbReference type="KEGG" id="azc:AZC_2201"/>
<dbReference type="eggNOG" id="COG1974">
    <property type="taxonomic scope" value="Bacteria"/>
</dbReference>
<dbReference type="HOGENOM" id="CLU_066192_45_2_5"/>
<dbReference type="Proteomes" id="UP000000270">
    <property type="component" value="Chromosome"/>
</dbReference>
<dbReference type="GO" id="GO:0003677">
    <property type="term" value="F:DNA binding"/>
    <property type="evidence" value="ECO:0007669"/>
    <property type="project" value="UniProtKB-UniRule"/>
</dbReference>
<dbReference type="GO" id="GO:0004252">
    <property type="term" value="F:serine-type endopeptidase activity"/>
    <property type="evidence" value="ECO:0007669"/>
    <property type="project" value="UniProtKB-UniRule"/>
</dbReference>
<dbReference type="GO" id="GO:0006281">
    <property type="term" value="P:DNA repair"/>
    <property type="evidence" value="ECO:0007669"/>
    <property type="project" value="UniProtKB-UniRule"/>
</dbReference>
<dbReference type="GO" id="GO:0006260">
    <property type="term" value="P:DNA replication"/>
    <property type="evidence" value="ECO:0007669"/>
    <property type="project" value="UniProtKB-UniRule"/>
</dbReference>
<dbReference type="GO" id="GO:0045892">
    <property type="term" value="P:negative regulation of DNA-templated transcription"/>
    <property type="evidence" value="ECO:0007669"/>
    <property type="project" value="UniProtKB-UniRule"/>
</dbReference>
<dbReference type="GO" id="GO:0006508">
    <property type="term" value="P:proteolysis"/>
    <property type="evidence" value="ECO:0007669"/>
    <property type="project" value="InterPro"/>
</dbReference>
<dbReference type="GO" id="GO:0009432">
    <property type="term" value="P:SOS response"/>
    <property type="evidence" value="ECO:0007669"/>
    <property type="project" value="UniProtKB-UniRule"/>
</dbReference>
<dbReference type="CDD" id="cd06529">
    <property type="entry name" value="S24_LexA-like"/>
    <property type="match status" value="1"/>
</dbReference>
<dbReference type="FunFam" id="1.10.10.10:FF:000102">
    <property type="entry name" value="LexA repressor"/>
    <property type="match status" value="1"/>
</dbReference>
<dbReference type="FunFam" id="2.10.109.10:FF:000001">
    <property type="entry name" value="LexA repressor"/>
    <property type="match status" value="1"/>
</dbReference>
<dbReference type="Gene3D" id="2.10.109.10">
    <property type="entry name" value="Umud Fragment, subunit A"/>
    <property type="match status" value="1"/>
</dbReference>
<dbReference type="Gene3D" id="1.10.10.10">
    <property type="entry name" value="Winged helix-like DNA-binding domain superfamily/Winged helix DNA-binding domain"/>
    <property type="match status" value="1"/>
</dbReference>
<dbReference type="HAMAP" id="MF_00015">
    <property type="entry name" value="LexA"/>
    <property type="match status" value="1"/>
</dbReference>
<dbReference type="InterPro" id="IPR006200">
    <property type="entry name" value="LexA"/>
</dbReference>
<dbReference type="InterPro" id="IPR039418">
    <property type="entry name" value="LexA-like"/>
</dbReference>
<dbReference type="InterPro" id="IPR036286">
    <property type="entry name" value="LexA/Signal_pep-like_sf"/>
</dbReference>
<dbReference type="InterPro" id="IPR006199">
    <property type="entry name" value="LexA_DNA-bd_dom"/>
</dbReference>
<dbReference type="InterPro" id="IPR050077">
    <property type="entry name" value="LexA_repressor"/>
</dbReference>
<dbReference type="InterPro" id="IPR006197">
    <property type="entry name" value="Peptidase_S24_LexA"/>
</dbReference>
<dbReference type="InterPro" id="IPR015927">
    <property type="entry name" value="Peptidase_S24_S26A/B/C"/>
</dbReference>
<dbReference type="InterPro" id="IPR036388">
    <property type="entry name" value="WH-like_DNA-bd_sf"/>
</dbReference>
<dbReference type="InterPro" id="IPR036390">
    <property type="entry name" value="WH_DNA-bd_sf"/>
</dbReference>
<dbReference type="NCBIfam" id="TIGR00498">
    <property type="entry name" value="lexA"/>
    <property type="match status" value="1"/>
</dbReference>
<dbReference type="PANTHER" id="PTHR33516">
    <property type="entry name" value="LEXA REPRESSOR"/>
    <property type="match status" value="1"/>
</dbReference>
<dbReference type="PANTHER" id="PTHR33516:SF2">
    <property type="entry name" value="LEXA REPRESSOR-RELATED"/>
    <property type="match status" value="1"/>
</dbReference>
<dbReference type="Pfam" id="PF01726">
    <property type="entry name" value="LexA_DNA_bind"/>
    <property type="match status" value="1"/>
</dbReference>
<dbReference type="Pfam" id="PF00717">
    <property type="entry name" value="Peptidase_S24"/>
    <property type="match status" value="1"/>
</dbReference>
<dbReference type="PRINTS" id="PR00726">
    <property type="entry name" value="LEXASERPTASE"/>
</dbReference>
<dbReference type="SUPFAM" id="SSF51306">
    <property type="entry name" value="LexA/Signal peptidase"/>
    <property type="match status" value="1"/>
</dbReference>
<dbReference type="SUPFAM" id="SSF46785">
    <property type="entry name" value="Winged helix' DNA-binding domain"/>
    <property type="match status" value="1"/>
</dbReference>
<proteinExistence type="inferred from homology"/>
<name>LEXA_AZOC5</name>
<organism>
    <name type="scientific">Azorhizobium caulinodans (strain ATCC 43989 / DSM 5975 / JCM 20966 / LMG 6465 / NBRC 14845 / NCIMB 13405 / ORS 571)</name>
    <dbReference type="NCBI Taxonomy" id="438753"/>
    <lineage>
        <taxon>Bacteria</taxon>
        <taxon>Pseudomonadati</taxon>
        <taxon>Pseudomonadota</taxon>
        <taxon>Alphaproteobacteria</taxon>
        <taxon>Hyphomicrobiales</taxon>
        <taxon>Xanthobacteraceae</taxon>
        <taxon>Azorhizobium</taxon>
    </lineage>
</organism>
<reference key="1">
    <citation type="submission" date="2007-04" db="EMBL/GenBank/DDBJ databases">
        <title>Complete genome sequence of the nitrogen-fixing bacterium Azorhizobium caulinodans ORS571.</title>
        <authorList>
            <person name="Lee K.B."/>
            <person name="Backer P.D."/>
            <person name="Aono T."/>
            <person name="Liu C.T."/>
            <person name="Suzuki S."/>
            <person name="Suzuki T."/>
            <person name="Kaneko T."/>
            <person name="Yamada M."/>
            <person name="Tabata S."/>
            <person name="Kupfer D.M."/>
            <person name="Najar F.Z."/>
            <person name="Wiley G.B."/>
            <person name="Roe B."/>
            <person name="Binnewies T."/>
            <person name="Ussery D."/>
            <person name="Vereecke D."/>
            <person name="Gevers D."/>
            <person name="Holsters M."/>
            <person name="Oyaizu H."/>
        </authorList>
    </citation>
    <scope>NUCLEOTIDE SEQUENCE [LARGE SCALE GENOMIC DNA]</scope>
    <source>
        <strain>ATCC 43989 / DSM 5975 / JCM 20966 / LMG 6465 / NBRC 14845 / NCIMB 13405 / ORS 571</strain>
    </source>
</reference>